<keyword id="KW-0028">Amino-acid biosynthesis</keyword>
<keyword id="KW-0046">Antibiotic resistance</keyword>
<keyword id="KW-0210">Decarboxylase</keyword>
<keyword id="KW-0456">Lyase</keyword>
<keyword id="KW-0457">Lysine biosynthesis</keyword>
<keyword id="KW-0663">Pyridoxal phosphate</keyword>
<gene>
    <name type="primary">lysA</name>
    <name type="ordered locus">SACOL1435</name>
</gene>
<organism>
    <name type="scientific">Staphylococcus aureus (strain COL)</name>
    <dbReference type="NCBI Taxonomy" id="93062"/>
    <lineage>
        <taxon>Bacteria</taxon>
        <taxon>Bacillati</taxon>
        <taxon>Bacillota</taxon>
        <taxon>Bacilli</taxon>
        <taxon>Bacillales</taxon>
        <taxon>Staphylococcaceae</taxon>
        <taxon>Staphylococcus</taxon>
    </lineage>
</organism>
<evidence type="ECO:0000250" key="1"/>
<evidence type="ECO:0000255" key="2"/>
<evidence type="ECO:0000269" key="3">
    <source>
    </source>
</evidence>
<evidence type="ECO:0000305" key="4"/>
<protein>
    <recommendedName>
        <fullName>Diaminopimelate decarboxylase</fullName>
        <shortName>DAP decarboxylase</shortName>
        <shortName>DAPDC</shortName>
        <ecNumber>4.1.1.20</ecNumber>
    </recommendedName>
</protein>
<dbReference type="EC" id="4.1.1.20"/>
<dbReference type="EMBL" id="CP000046">
    <property type="protein sequence ID" value="AAW38180.1"/>
    <property type="molecule type" value="Genomic_DNA"/>
</dbReference>
<dbReference type="RefSeq" id="WP_000216946.1">
    <property type="nucleotide sequence ID" value="NZ_JBGOFO010000003.1"/>
</dbReference>
<dbReference type="SMR" id="Q5HG20"/>
<dbReference type="KEGG" id="sac:SACOL1435"/>
<dbReference type="HOGENOM" id="CLU_026444_0_1_9"/>
<dbReference type="SABIO-RK" id="Q5HG20"/>
<dbReference type="UniPathway" id="UPA00034">
    <property type="reaction ID" value="UER00027"/>
</dbReference>
<dbReference type="Proteomes" id="UP000000530">
    <property type="component" value="Chromosome"/>
</dbReference>
<dbReference type="GO" id="GO:0008836">
    <property type="term" value="F:diaminopimelate decarboxylase activity"/>
    <property type="evidence" value="ECO:0007669"/>
    <property type="project" value="UniProtKB-UniRule"/>
</dbReference>
<dbReference type="GO" id="GO:0030170">
    <property type="term" value="F:pyridoxal phosphate binding"/>
    <property type="evidence" value="ECO:0007669"/>
    <property type="project" value="UniProtKB-UniRule"/>
</dbReference>
<dbReference type="GO" id="GO:0009089">
    <property type="term" value="P:lysine biosynthetic process via diaminopimelate"/>
    <property type="evidence" value="ECO:0007669"/>
    <property type="project" value="UniProtKB-UniRule"/>
</dbReference>
<dbReference type="GO" id="GO:0046677">
    <property type="term" value="P:response to antibiotic"/>
    <property type="evidence" value="ECO:0007669"/>
    <property type="project" value="UniProtKB-KW"/>
</dbReference>
<dbReference type="CDD" id="cd06828">
    <property type="entry name" value="PLPDE_III_DapDC"/>
    <property type="match status" value="1"/>
</dbReference>
<dbReference type="FunFam" id="2.40.37.10:FF:000003">
    <property type="entry name" value="Diaminopimelate decarboxylase"/>
    <property type="match status" value="1"/>
</dbReference>
<dbReference type="FunFam" id="3.20.20.10:FF:000003">
    <property type="entry name" value="Diaminopimelate decarboxylase"/>
    <property type="match status" value="1"/>
</dbReference>
<dbReference type="Gene3D" id="3.20.20.10">
    <property type="entry name" value="Alanine racemase"/>
    <property type="match status" value="1"/>
</dbReference>
<dbReference type="Gene3D" id="2.40.37.10">
    <property type="entry name" value="Lyase, Ornithine Decarboxylase, Chain A, domain 1"/>
    <property type="match status" value="1"/>
</dbReference>
<dbReference type="HAMAP" id="MF_02120">
    <property type="entry name" value="LysA"/>
    <property type="match status" value="1"/>
</dbReference>
<dbReference type="InterPro" id="IPR009006">
    <property type="entry name" value="Ala_racemase/Decarboxylase_C"/>
</dbReference>
<dbReference type="InterPro" id="IPR002986">
    <property type="entry name" value="DAP_deCOOHase_LysA"/>
</dbReference>
<dbReference type="InterPro" id="IPR022643">
    <property type="entry name" value="De-COase2_C"/>
</dbReference>
<dbReference type="InterPro" id="IPR022657">
    <property type="entry name" value="De-COase2_CS"/>
</dbReference>
<dbReference type="InterPro" id="IPR022644">
    <property type="entry name" value="De-COase2_N"/>
</dbReference>
<dbReference type="InterPro" id="IPR000183">
    <property type="entry name" value="Orn/DAP/Arg_de-COase"/>
</dbReference>
<dbReference type="InterPro" id="IPR029066">
    <property type="entry name" value="PLP-binding_barrel"/>
</dbReference>
<dbReference type="NCBIfam" id="TIGR01048">
    <property type="entry name" value="lysA"/>
    <property type="match status" value="1"/>
</dbReference>
<dbReference type="PANTHER" id="PTHR43727">
    <property type="entry name" value="DIAMINOPIMELATE DECARBOXYLASE"/>
    <property type="match status" value="1"/>
</dbReference>
<dbReference type="PANTHER" id="PTHR43727:SF2">
    <property type="entry name" value="GROUP IV DECARBOXYLASE"/>
    <property type="match status" value="1"/>
</dbReference>
<dbReference type="Pfam" id="PF02784">
    <property type="entry name" value="Orn_Arg_deC_N"/>
    <property type="match status" value="1"/>
</dbReference>
<dbReference type="Pfam" id="PF00278">
    <property type="entry name" value="Orn_DAP_Arg_deC"/>
    <property type="match status" value="1"/>
</dbReference>
<dbReference type="PRINTS" id="PR01181">
    <property type="entry name" value="DAPDCRBXLASE"/>
</dbReference>
<dbReference type="PRINTS" id="PR01179">
    <property type="entry name" value="ODADCRBXLASE"/>
</dbReference>
<dbReference type="SUPFAM" id="SSF50621">
    <property type="entry name" value="Alanine racemase C-terminal domain-like"/>
    <property type="match status" value="1"/>
</dbReference>
<dbReference type="SUPFAM" id="SSF51419">
    <property type="entry name" value="PLP-binding barrel"/>
    <property type="match status" value="1"/>
</dbReference>
<dbReference type="PROSITE" id="PS00879">
    <property type="entry name" value="ODR_DC_2_2"/>
    <property type="match status" value="1"/>
</dbReference>
<name>DCDA_STAAC</name>
<comment type="function">
    <text evidence="1">Specifically catalyzes the decarboxylation of meso-diaminopimelate (meso-DAP) to L-lysine (By similarity). Plays a role in beta-lactam antibiotic resistance.</text>
</comment>
<comment type="catalytic activity">
    <reaction>
        <text>meso-2,6-diaminopimelate + H(+) = L-lysine + CO2</text>
        <dbReference type="Rhea" id="RHEA:15101"/>
        <dbReference type="ChEBI" id="CHEBI:15378"/>
        <dbReference type="ChEBI" id="CHEBI:16526"/>
        <dbReference type="ChEBI" id="CHEBI:32551"/>
        <dbReference type="ChEBI" id="CHEBI:57791"/>
        <dbReference type="EC" id="4.1.1.20"/>
    </reaction>
</comment>
<comment type="cofactor">
    <cofactor evidence="1">
        <name>pyridoxal 5'-phosphate</name>
        <dbReference type="ChEBI" id="CHEBI:597326"/>
    </cofactor>
</comment>
<comment type="pathway">
    <text>Amino-acid biosynthesis; L-lysine biosynthesis via DAP pathway; L-lysine from DL-2,6-diaminopimelate: step 1/1.</text>
</comment>
<comment type="subunit">
    <text evidence="1">Homodimer.</text>
</comment>
<comment type="disruption phenotype">
    <text evidence="3">Disruption of this gene does not affect growth in rich organic media but reduces the level of methicillin resistance by nearly 100-fold.</text>
</comment>
<comment type="similarity">
    <text evidence="4">Belongs to the Orn/Lys/Arg decarboxylase class-II family. LysA subfamily.</text>
</comment>
<sequence>MTVKYNQNGELTMDGISLKTIAQSFGTPTIVYDELQIREQMRRYHRAFKDSGLKYNISYASKAFTCIQMVKLVAEEDLQLDVVSEGELYTALEAGFEPSRIHFHGNNKTKHEIRYALENNIGYFVIDSLEEIELIDRYANDTVQVVLRVNPGVEAHTHEFIQTGQEDSKFGLSIQYGLAKKAIDKVQQSKHLKLKGVHCHIGSQIEGTEAFIETAKIVLRWLKEQGIQVELLNLGGGFGIKYVEGDESFPIESGIKDITDAIKSEIKVLGIDAPEIGIEPGRSIVGEAGVTLYEVGTIKEIPEINKYVSIDGGMSDHIRTALYDAKYQALLVNRNEEADDSVTIAGKLCESGDIIIKDAKLPSSVKRGDYLAILSTGAYHYSMASNYNQMQKPSVFFLKDGKAREVIKRQSLRQLIINDTK</sequence>
<feature type="chain" id="PRO_0000411131" description="Diaminopimelate decarboxylase">
    <location>
        <begin position="1"/>
        <end position="421"/>
    </location>
</feature>
<feature type="active site" description="Proton donor" evidence="2">
    <location>
        <position position="349"/>
    </location>
</feature>
<feature type="binding site" evidence="1">
    <location>
        <position position="237"/>
    </location>
    <ligand>
        <name>pyridoxal 5'-phosphate</name>
        <dbReference type="ChEBI" id="CHEBI:597326"/>
    </ligand>
</feature>
<feature type="binding site" evidence="1">
    <location>
        <begin position="279"/>
        <end position="282"/>
    </location>
    <ligand>
        <name>pyridoxal 5'-phosphate</name>
        <dbReference type="ChEBI" id="CHEBI:597326"/>
    </ligand>
</feature>
<feature type="binding site" evidence="1">
    <location>
        <position position="282"/>
    </location>
    <ligand>
        <name>substrate</name>
    </ligand>
</feature>
<feature type="binding site" evidence="1">
    <location>
        <position position="319"/>
    </location>
    <ligand>
        <name>substrate</name>
    </ligand>
</feature>
<feature type="binding site" evidence="1">
    <location>
        <position position="323"/>
    </location>
    <ligand>
        <name>substrate</name>
    </ligand>
</feature>
<feature type="binding site" evidence="1">
    <location>
        <position position="350"/>
    </location>
    <ligand>
        <name>substrate</name>
    </ligand>
</feature>
<feature type="binding site" evidence="1">
    <location>
        <position position="379"/>
    </location>
    <ligand>
        <name>pyridoxal 5'-phosphate</name>
        <dbReference type="ChEBI" id="CHEBI:597326"/>
    </ligand>
</feature>
<feature type="binding site" evidence="1">
    <location>
        <position position="379"/>
    </location>
    <ligand>
        <name>substrate</name>
    </ligand>
</feature>
<feature type="modified residue" description="N6-(pyridoxal phosphate)lysine" evidence="1">
    <location>
        <position position="62"/>
    </location>
</feature>
<accession>Q5HG20</accession>
<reference key="1">
    <citation type="journal article" date="2005" name="J. Bacteriol.">
        <title>Insights on evolution of virulence and resistance from the complete genome analysis of an early methicillin-resistant Staphylococcus aureus strain and a biofilm-producing methicillin-resistant Staphylococcus epidermidis strain.</title>
        <authorList>
            <person name="Gill S.R."/>
            <person name="Fouts D.E."/>
            <person name="Archer G.L."/>
            <person name="Mongodin E.F."/>
            <person name="DeBoy R.T."/>
            <person name="Ravel J."/>
            <person name="Paulsen I.T."/>
            <person name="Kolonay J.F."/>
            <person name="Brinkac L.M."/>
            <person name="Beanan M.J."/>
            <person name="Dodson R.J."/>
            <person name="Daugherty S.C."/>
            <person name="Madupu R."/>
            <person name="Angiuoli S.V."/>
            <person name="Durkin A.S."/>
            <person name="Haft D.H."/>
            <person name="Vamathevan J.J."/>
            <person name="Khouri H."/>
            <person name="Utterback T.R."/>
            <person name="Lee C."/>
            <person name="Dimitrov G."/>
            <person name="Jiang L."/>
            <person name="Qin H."/>
            <person name="Weidman J."/>
            <person name="Tran K."/>
            <person name="Kang K.H."/>
            <person name="Hance I.R."/>
            <person name="Nelson K.E."/>
            <person name="Fraser C.M."/>
        </authorList>
    </citation>
    <scope>NUCLEOTIDE SEQUENCE [LARGE SCALE GENOMIC DNA]</scope>
    <source>
        <strain>COL</strain>
    </source>
</reference>
<reference key="2">
    <citation type="journal article" date="1999" name="Microb. Drug Resist.">
        <title>Antibiotic resistance as a stress response: complete sequencing of a large number of chromosomal loci in Staphylococcus aureus strain COL that impact on the expression of resistance to methicillin.</title>
        <authorList>
            <person name="de Lencastre H."/>
            <person name="Wu S.-W."/>
            <person name="Pinho M.G."/>
            <person name="Ludovice A.M."/>
            <person name="Filipe S."/>
            <person name="Gardete S."/>
            <person name="Sobral R."/>
            <person name="Gill S.R."/>
            <person name="Chung M."/>
            <person name="Tomasz A."/>
        </authorList>
    </citation>
    <scope>DISRUPTION PHENOTYPE</scope>
    <source>
        <strain>COL</strain>
    </source>
</reference>
<proteinExistence type="inferred from homology"/>